<dbReference type="EMBL" id="U19747">
    <property type="protein sequence ID" value="AAA92689.1"/>
    <property type="molecule type" value="mRNA"/>
</dbReference>
<dbReference type="EMBL" id="U19746">
    <property type="protein sequence ID" value="AAA92688.1"/>
    <property type="molecule type" value="Genomic_DNA"/>
</dbReference>
<dbReference type="EMBL" id="Z74039">
    <property type="protein sequence ID" value="CAA98507.1"/>
    <property type="molecule type" value="Genomic_DNA"/>
</dbReference>
<dbReference type="PIR" id="T23269">
    <property type="entry name" value="T23269"/>
</dbReference>
<dbReference type="RefSeq" id="NP_001379138.1">
    <property type="nucleotide sequence ID" value="NM_001392614.1"/>
</dbReference>
<dbReference type="RefSeq" id="NP_505897.1">
    <property type="nucleotide sequence ID" value="NM_073496.5"/>
</dbReference>
<dbReference type="SMR" id="P54244"/>
<dbReference type="BioGRID" id="532518">
    <property type="interactions" value="2"/>
</dbReference>
<dbReference type="FunCoup" id="P54244">
    <property type="interactions" value="73"/>
</dbReference>
<dbReference type="STRING" id="6239.K03B8.9.1"/>
<dbReference type="TCDB" id="1.A.9.1.14">
    <property type="family name" value="the neurotransmitter receptor, cys loop, ligand-gated ion channel (lic) family"/>
</dbReference>
<dbReference type="GlyCosmos" id="P54244">
    <property type="glycosylation" value="4 sites, No reported glycans"/>
</dbReference>
<dbReference type="iPTMnet" id="P54244"/>
<dbReference type="PaxDb" id="6239-K03B8.9.1"/>
<dbReference type="EnsemblMetazoa" id="K03B8.9.1">
    <property type="protein sequence ID" value="K03B8.9.1"/>
    <property type="gene ID" value="WBGene00000951"/>
</dbReference>
<dbReference type="EnsemblMetazoa" id="K03B8.9.2">
    <property type="protein sequence ID" value="K03B8.9.2"/>
    <property type="gene ID" value="WBGene00000951"/>
</dbReference>
<dbReference type="GeneID" id="3565200"/>
<dbReference type="UCSC" id="K03B8.9.2">
    <property type="organism name" value="c. elegans"/>
</dbReference>
<dbReference type="AGR" id="WB:WBGene00000951"/>
<dbReference type="WormBase" id="K03B8.9">
    <property type="protein sequence ID" value="CE06083"/>
    <property type="gene ID" value="WBGene00000951"/>
    <property type="gene designation" value="deg-3"/>
</dbReference>
<dbReference type="eggNOG" id="KOG3645">
    <property type="taxonomic scope" value="Eukaryota"/>
</dbReference>
<dbReference type="HOGENOM" id="CLU_018074_0_2_1"/>
<dbReference type="InParanoid" id="P54244"/>
<dbReference type="OMA" id="IPNEEWQ"/>
<dbReference type="OrthoDB" id="410315at2759"/>
<dbReference type="PhylomeDB" id="P54244"/>
<dbReference type="Reactome" id="R-CEL-112314">
    <property type="pathway name" value="Neurotransmitter receptors and postsynaptic signal transmission"/>
</dbReference>
<dbReference type="Reactome" id="R-CEL-629594">
    <property type="pathway name" value="Highly calcium permeable postsynaptic nicotinic acetylcholine receptors"/>
</dbReference>
<dbReference type="PRO" id="PR:P54244"/>
<dbReference type="Proteomes" id="UP000001940">
    <property type="component" value="Chromosome V"/>
</dbReference>
<dbReference type="Bgee" id="WBGene00000951">
    <property type="expression patterns" value="Expressed in larva and 2 other cell types or tissues"/>
</dbReference>
<dbReference type="GO" id="GO:0043005">
    <property type="term" value="C:neuron projection"/>
    <property type="evidence" value="ECO:0000318"/>
    <property type="project" value="GO_Central"/>
</dbReference>
<dbReference type="GO" id="GO:0005886">
    <property type="term" value="C:plasma membrane"/>
    <property type="evidence" value="ECO:0000318"/>
    <property type="project" value="GO_Central"/>
</dbReference>
<dbReference type="GO" id="GO:0045211">
    <property type="term" value="C:postsynaptic membrane"/>
    <property type="evidence" value="ECO:0007669"/>
    <property type="project" value="UniProtKB-SubCell"/>
</dbReference>
<dbReference type="GO" id="GO:0045202">
    <property type="term" value="C:synapse"/>
    <property type="evidence" value="ECO:0000318"/>
    <property type="project" value="GO_Central"/>
</dbReference>
<dbReference type="GO" id="GO:1902495">
    <property type="term" value="C:transmembrane transporter complex"/>
    <property type="evidence" value="ECO:0000318"/>
    <property type="project" value="GO_Central"/>
</dbReference>
<dbReference type="GO" id="GO:0005231">
    <property type="term" value="F:excitatory extracellular ligand-gated monoatomic ion channel activity"/>
    <property type="evidence" value="ECO:0000318"/>
    <property type="project" value="GO_Central"/>
</dbReference>
<dbReference type="GO" id="GO:0004888">
    <property type="term" value="F:transmembrane signaling receptor activity"/>
    <property type="evidence" value="ECO:0007669"/>
    <property type="project" value="InterPro"/>
</dbReference>
<dbReference type="GO" id="GO:1904315">
    <property type="term" value="F:transmitter-gated monoatomic ion channel activity involved in regulation of postsynaptic membrane potential"/>
    <property type="evidence" value="ECO:0000318"/>
    <property type="project" value="GO_Central"/>
</dbReference>
<dbReference type="GO" id="GO:0007268">
    <property type="term" value="P:chemical synaptic transmission"/>
    <property type="evidence" value="ECO:0000318"/>
    <property type="project" value="GO_Central"/>
</dbReference>
<dbReference type="GO" id="GO:0034220">
    <property type="term" value="P:monoatomic ion transmembrane transport"/>
    <property type="evidence" value="ECO:0000318"/>
    <property type="project" value="GO_Central"/>
</dbReference>
<dbReference type="GO" id="GO:0090326">
    <property type="term" value="P:positive regulation of locomotion involved in locomotory behavior"/>
    <property type="evidence" value="ECO:0000315"/>
    <property type="project" value="UniProtKB"/>
</dbReference>
<dbReference type="GO" id="GO:0042391">
    <property type="term" value="P:regulation of membrane potential"/>
    <property type="evidence" value="ECO:0000318"/>
    <property type="project" value="GO_Central"/>
</dbReference>
<dbReference type="GO" id="GO:0043067">
    <property type="term" value="P:regulation of programmed cell death"/>
    <property type="evidence" value="ECO:0000315"/>
    <property type="project" value="WormBase"/>
</dbReference>
<dbReference type="CDD" id="cd18997">
    <property type="entry name" value="LGIC_ECD_nAChR"/>
    <property type="match status" value="1"/>
</dbReference>
<dbReference type="CDD" id="cd19051">
    <property type="entry name" value="LGIC_TM_cation"/>
    <property type="match status" value="1"/>
</dbReference>
<dbReference type="FunFam" id="1.20.58.390:FF:000063">
    <property type="entry name" value="AcetylCholine Receptor"/>
    <property type="match status" value="1"/>
</dbReference>
<dbReference type="FunFam" id="2.70.170.10:FF:000031">
    <property type="entry name" value="AcetylCholine Receptor"/>
    <property type="match status" value="1"/>
</dbReference>
<dbReference type="Gene3D" id="2.70.170.10">
    <property type="entry name" value="Neurotransmitter-gated ion-channel ligand-binding domain"/>
    <property type="match status" value="1"/>
</dbReference>
<dbReference type="Gene3D" id="1.20.58.390">
    <property type="entry name" value="Neurotransmitter-gated ion-channel transmembrane domain"/>
    <property type="match status" value="2"/>
</dbReference>
<dbReference type="InterPro" id="IPR006202">
    <property type="entry name" value="Neur_chan_lig-bd"/>
</dbReference>
<dbReference type="InterPro" id="IPR036734">
    <property type="entry name" value="Neur_chan_lig-bd_sf"/>
</dbReference>
<dbReference type="InterPro" id="IPR006201">
    <property type="entry name" value="Neur_channel"/>
</dbReference>
<dbReference type="InterPro" id="IPR036719">
    <property type="entry name" value="Neuro-gated_channel_TM_sf"/>
</dbReference>
<dbReference type="InterPro" id="IPR038050">
    <property type="entry name" value="Neuro_actylchol_rec"/>
</dbReference>
<dbReference type="InterPro" id="IPR006029">
    <property type="entry name" value="Neurotrans-gated_channel_TM"/>
</dbReference>
<dbReference type="InterPro" id="IPR018000">
    <property type="entry name" value="Neurotransmitter_ion_chnl_CS"/>
</dbReference>
<dbReference type="PANTHER" id="PTHR18945">
    <property type="entry name" value="NEUROTRANSMITTER GATED ION CHANNEL"/>
    <property type="match status" value="1"/>
</dbReference>
<dbReference type="Pfam" id="PF02931">
    <property type="entry name" value="Neur_chan_LBD"/>
    <property type="match status" value="1"/>
</dbReference>
<dbReference type="Pfam" id="PF02932">
    <property type="entry name" value="Neur_chan_memb"/>
    <property type="match status" value="1"/>
</dbReference>
<dbReference type="PRINTS" id="PR00252">
    <property type="entry name" value="NRIONCHANNEL"/>
</dbReference>
<dbReference type="SUPFAM" id="SSF90112">
    <property type="entry name" value="Neurotransmitter-gated ion-channel transmembrane pore"/>
    <property type="match status" value="1"/>
</dbReference>
<dbReference type="SUPFAM" id="SSF63712">
    <property type="entry name" value="Nicotinic receptor ligand binding domain-like"/>
    <property type="match status" value="1"/>
</dbReference>
<dbReference type="PROSITE" id="PS00236">
    <property type="entry name" value="NEUROTR_ION_CHANNEL"/>
    <property type="match status" value="1"/>
</dbReference>
<sequence>MTLKIRTIIILFCVISVTTTSQSLNATLKTFDPRLLNSTADRDIAMKNVPLVRLTRHLLSPERYDVRVRPILDHKKSLKVHISISLYQIIEVDEPSQNIKLNVWMIQKWRDEYLDWNPNEYGMINSTIIPFHHLWIPDTYLYNSVKMSRDETERYMNIQATSNYWKGEKGAELSFLYPAIYTITCRLNIRFFPYDRQNCTLTISSWTNSKSALDYYADTEVSMQSFIPNEEWQVKSFKIHRHEYKYACCAEPWVILQASLVIQRKPLYYLVNLIIPTSIITLVAITGFFTPASTDDDRTEKINLGITTLLAMSILMLMVSDQMPTTSEFVPLIAWFYLSIIIIISIGTFLTSVVLSVQGRRQYGRNPPQFIRYIFFVLLPQVLLLNVPPPLQTLWGELDDDPLNVRRRKKSHYLSRNVNNGSTKMASPMSTLRVPQSAGSVSEKRQSFQMIDVTSPNSPNTARSRAPSLAPSTAKATMWEGTMSALAGTNTQLRRTSNVFNKEVDEMRRKRQCSLEWEFLATVLDRFLLIVFVGAVVIVTAGLILVGRMAQYSYDHPDDRFFNV</sequence>
<gene>
    <name type="primary">deg-3</name>
    <name type="ORF">K03B8.9</name>
</gene>
<evidence type="ECO:0000250" key="1"/>
<evidence type="ECO:0000255" key="2"/>
<evidence type="ECO:0000269" key="3">
    <source>
    </source>
</evidence>
<evidence type="ECO:0000269" key="4">
    <source>
    </source>
</evidence>
<evidence type="ECO:0000269" key="5">
    <source>
    </source>
</evidence>
<evidence type="ECO:0000269" key="6">
    <source>
    </source>
</evidence>
<evidence type="ECO:0000269" key="7">
    <source>
    </source>
</evidence>
<evidence type="ECO:0000269" key="8">
    <source>
    </source>
</evidence>
<evidence type="ECO:0000269" key="9">
    <source>
    </source>
</evidence>
<evidence type="ECO:0000305" key="10"/>
<proteinExistence type="evidence at protein level"/>
<feature type="signal peptide" evidence="2">
    <location>
        <begin position="1"/>
        <end position="20"/>
    </location>
</feature>
<feature type="chain" id="PRO_0000000397" description="Acetylcholine receptor subunit alpha-type deg-3">
    <location>
        <begin position="21"/>
        <end position="564"/>
    </location>
</feature>
<feature type="topological domain" description="Extracellular" evidence="2">
    <location>
        <begin position="21"/>
        <end position="268"/>
    </location>
</feature>
<feature type="transmembrane region" description="Helical" evidence="2">
    <location>
        <begin position="269"/>
        <end position="289"/>
    </location>
</feature>
<feature type="transmembrane region" description="Helical" evidence="2">
    <location>
        <begin position="302"/>
        <end position="319"/>
    </location>
</feature>
<feature type="transmembrane region" description="Helical" evidence="2">
    <location>
        <begin position="329"/>
        <end position="353"/>
    </location>
</feature>
<feature type="topological domain" description="Cytoplasmic" evidence="2">
    <location>
        <begin position="354"/>
        <end position="526"/>
    </location>
</feature>
<feature type="transmembrane region" description="Helical" evidence="2">
    <location>
        <begin position="527"/>
        <end position="547"/>
    </location>
</feature>
<feature type="glycosylation site" description="N-linked (GlcNAc...) asparagine" evidence="2">
    <location>
        <position position="25"/>
    </location>
</feature>
<feature type="glycosylation site" description="N-linked (GlcNAc...) asparagine" evidence="6">
    <location>
        <position position="37"/>
    </location>
</feature>
<feature type="glycosylation site" description="N-linked (GlcNAc...) asparagine" evidence="2">
    <location>
        <position position="125"/>
    </location>
</feature>
<feature type="glycosylation site" description="N-linked (GlcNAc...) asparagine" evidence="2">
    <location>
        <position position="198"/>
    </location>
</feature>
<feature type="disulfide bond" evidence="1">
    <location>
        <begin position="185"/>
        <end position="199"/>
    </location>
</feature>
<feature type="disulfide bond" evidence="1">
    <location>
        <begin position="248"/>
        <end position="249"/>
    </location>
</feature>
<feature type="mutagenesis site" description="In u662; degeneration of a set of touch receptor neurons, including ALA neurons, probably due to channel hyperactivity (gain-of-function). Uncoordinated, insensitive to both gentle and harsh stimuli, and display vacuolated cell death. Restores normal pharyngeal pumping rate in animals overexpressing lin-3." evidence="7 8">
    <original>I</original>
    <variation>N</variation>
    <location>
        <position position="314"/>
    </location>
</feature>
<name>ACH3_CAEEL</name>
<keyword id="KW-1003">Cell membrane</keyword>
<keyword id="KW-1015">Disulfide bond</keyword>
<keyword id="KW-0325">Glycoprotein</keyword>
<keyword id="KW-0407">Ion channel</keyword>
<keyword id="KW-0406">Ion transport</keyword>
<keyword id="KW-1071">Ligand-gated ion channel</keyword>
<keyword id="KW-0472">Membrane</keyword>
<keyword id="KW-0628">Postsynaptic cell membrane</keyword>
<keyword id="KW-0675">Receptor</keyword>
<keyword id="KW-1185">Reference proteome</keyword>
<keyword id="KW-0732">Signal</keyword>
<keyword id="KW-0770">Synapse</keyword>
<keyword id="KW-0812">Transmembrane</keyword>
<keyword id="KW-1133">Transmembrane helix</keyword>
<keyword id="KW-0813">Transport</keyword>
<reference key="1">
    <citation type="journal article" date="1995" name="Neuron">
        <title>A mutated acetylcholine receptor subunit causes neuronal degeneration in C. elegans.</title>
        <authorList>
            <person name="Treinin M."/>
            <person name="Chalfie M."/>
        </authorList>
    </citation>
    <scope>NUCLEOTIDE SEQUENCE [GENOMIC DNA / MRNA]</scope>
    <scope>MUTAGENESIS OF ILE-314</scope>
    <source>
        <strain>Bristol N2</strain>
    </source>
</reference>
<reference key="2">
    <citation type="journal article" date="1998" name="Science">
        <title>Genome sequence of the nematode C. elegans: a platform for investigating biology.</title>
        <authorList>
            <consortium name="The C. elegans sequencing consortium"/>
        </authorList>
    </citation>
    <scope>NUCLEOTIDE SEQUENCE [LARGE SCALE GENOMIC DNA]</scope>
    <source>
        <strain>Bristol N2</strain>
    </source>
</reference>
<reference key="3">
    <citation type="journal article" date="1998" name="Proc. Natl. Acad. Sci. U.S.A.">
        <title>Two functionally dependent acetylcholine subunits are encoded in a single Caenorhabditis elegans operon.</title>
        <authorList>
            <person name="Treinin M."/>
            <person name="Gillo B."/>
            <person name="Liebman L."/>
            <person name="Chalfie M."/>
        </authorList>
    </citation>
    <scope>INTERACTION WITH DES-2</scope>
    <scope>FUNCTION</scope>
</reference>
<reference key="4">
    <citation type="journal article" date="2001" name="Mol. Cell. Neurosci.">
        <title>Characterization of the deg-3/des-2 receptor: a nicotinic acetylcholine receptor that mutates to cause neuronal degeneration.</title>
        <authorList>
            <person name="Yassin L."/>
            <person name="Gillo B."/>
            <person name="Kahan T."/>
            <person name="Halevi S."/>
            <person name="Eshel M."/>
            <person name="Treinin M."/>
        </authorList>
    </citation>
    <scope>SUBCELLULAR LOCATION</scope>
    <scope>FUNCTION</scope>
</reference>
<reference key="5">
    <citation type="journal article" date="2002" name="EMBO J.">
        <title>The C. elegans ric-3 gene is required for maturation of nicotinic acetylcholine receptors.</title>
        <authorList>
            <person name="Halevi S."/>
            <person name="McKay J."/>
            <person name="Palfreyman M."/>
            <person name="Yassin L."/>
            <person name="Eshel M."/>
            <person name="Jorgensen E."/>
            <person name="Treinin M."/>
        </authorList>
    </citation>
    <scope>INTERACTION WITH DES-2 AND RIC-3</scope>
</reference>
<reference key="6">
    <citation type="journal article" date="2005" name="J. Biol. Chem.">
        <title>RIC-3 affects properties and quantity of nicotinic acetylcholine receptors via a mechanism that does not require the coiled-coil domains.</title>
        <authorList>
            <person name="Ben-Ami H.C."/>
            <person name="Yassin L."/>
            <person name="Farah H."/>
            <person name="Michaeli A."/>
            <person name="Eshel M."/>
            <person name="Treinin M."/>
        </authorList>
    </citation>
    <scope>INTERACTION WITH DES-2 AND RIC-3</scope>
</reference>
<reference key="7">
    <citation type="journal article" date="2007" name="Mol. Cell. Proteomics">
        <title>Proteomics reveals N-linked glycoprotein diversity in Caenorhabditis elegans and suggests an atypical translocation mechanism for integral membrane proteins.</title>
        <authorList>
            <person name="Kaji H."/>
            <person name="Kamiie J."/>
            <person name="Kawakami H."/>
            <person name="Kido K."/>
            <person name="Yamauchi Y."/>
            <person name="Shinkawa T."/>
            <person name="Taoka M."/>
            <person name="Takahashi N."/>
            <person name="Isobe T."/>
        </authorList>
    </citation>
    <scope>GLYCOSYLATION [LARGE SCALE ANALYSIS] AT ASN-37</scope>
    <scope>IDENTIFICATION BY MASS SPECTROMETRY</scope>
    <source>
        <strain>Bristol N2</strain>
    </source>
</reference>
<reference key="8">
    <citation type="journal article" date="2007" name="Nat. Neurosci.">
        <title>Epidermal growth factor signaling induces behavioral quiescence in Caenorhabditis elegans.</title>
        <authorList>
            <person name="Van Buskirk C."/>
            <person name="Sternberg P.W."/>
        </authorList>
    </citation>
    <scope>MUTAGENESIS OF ILE-314</scope>
</reference>
<organism>
    <name type="scientific">Caenorhabditis elegans</name>
    <dbReference type="NCBI Taxonomy" id="6239"/>
    <lineage>
        <taxon>Eukaryota</taxon>
        <taxon>Metazoa</taxon>
        <taxon>Ecdysozoa</taxon>
        <taxon>Nematoda</taxon>
        <taxon>Chromadorea</taxon>
        <taxon>Rhabditida</taxon>
        <taxon>Rhabditina</taxon>
        <taxon>Rhabditomorpha</taxon>
        <taxon>Rhabditoidea</taxon>
        <taxon>Rhabditidae</taxon>
        <taxon>Peloderinae</taxon>
        <taxon>Caenorhabditis</taxon>
    </lineage>
</organism>
<accession>P54244</accession>
<protein>
    <recommendedName>
        <fullName>Acetylcholine receptor subunit alpha-type deg-3</fullName>
    </recommendedName>
</protein>
<comment type="function">
    <text evidence="3 9">Subunit of the non-synaptic neuronal acetylcholine receptor, which may play a role in chemotaxis towards choline. After binding choline or acetylcholine, the AChR responds by an extensive change in conformation that affects all subunits and leads to opening of an ion-conducting channel across the plasma membrane (PubMed:11273652, PubMed:9860996).</text>
</comment>
<comment type="subunit">
    <text evidence="4 5 9">The functional receptor is a heteromer of deg-3 and des-2. Interacts with ric-3; which is required for proper receptor folding.</text>
</comment>
<comment type="subcellular location">
    <subcellularLocation>
        <location evidence="3">Postsynaptic cell membrane</location>
        <topology evidence="3">Multi-pass membrane protein</topology>
    </subcellularLocation>
    <subcellularLocation>
        <location evidence="3">Cell membrane</location>
        <topology evidence="3">Multi-pass membrane protein</topology>
    </subcellularLocation>
    <text>Enriched in the sensory endings of sensory neurons.</text>
</comment>
<comment type="miscellaneous">
    <text>This locus is redundant or nonessential as suppression of deg-3 function results in wild-type revertants.</text>
</comment>
<comment type="similarity">
    <text evidence="10">Belongs to the ligand-gated ion channel (TC 1.A.9) family. Acetylcholine receptor (TC 1.A.9.1) subfamily.</text>
</comment>